<comment type="function">
    <text evidence="2">Essential subunit of the Sec protein translocation channel SecYEG. Clamps together the 2 halves of SecY. May contact the channel plug during translocation.</text>
</comment>
<comment type="subunit">
    <text evidence="2">Component of the Sec protein translocase complex. Heterotrimer consisting of SecY, SecE and SecG subunits. The heterotrimers can form oligomers, although 1 heterotrimer is thought to be able to translocate proteins. Interacts with the ribosome. Interacts with SecDF, and other proteins may be involved. Interacts with SecA.</text>
</comment>
<comment type="subcellular location">
    <subcellularLocation>
        <location evidence="2">Cell inner membrane</location>
        <topology evidence="2">Multi-pass membrane protein</topology>
    </subcellularLocation>
</comment>
<comment type="similarity">
    <text evidence="2">Belongs to the SecE/SEC61-gamma family.</text>
</comment>
<keyword id="KW-0997">Cell inner membrane</keyword>
<keyword id="KW-1003">Cell membrane</keyword>
<keyword id="KW-0472">Membrane</keyword>
<keyword id="KW-0653">Protein transport</keyword>
<keyword id="KW-1185">Reference proteome</keyword>
<keyword id="KW-0811">Translocation</keyword>
<keyword id="KW-0812">Transmembrane</keyword>
<keyword id="KW-1133">Transmembrane helix</keyword>
<keyword id="KW-0813">Transport</keyword>
<evidence type="ECO:0000250" key="1"/>
<evidence type="ECO:0000255" key="2">
    <source>
        <dbReference type="HAMAP-Rule" id="MF_00422"/>
    </source>
</evidence>
<feature type="chain" id="PRO_0000104164" description="Protein translocase subunit SecE">
    <location>
        <begin position="1"/>
        <end position="127"/>
    </location>
</feature>
<feature type="topological domain" description="Cytoplasmic" evidence="1">
    <location>
        <begin position="1"/>
        <end position="19"/>
    </location>
</feature>
<feature type="transmembrane region" description="Helical" evidence="2">
    <location>
        <begin position="20"/>
        <end position="32"/>
    </location>
</feature>
<feature type="topological domain" description="Periplasmic" evidence="1">
    <location>
        <begin position="33"/>
        <end position="48"/>
    </location>
</feature>
<feature type="transmembrane region" description="Helical" evidence="2">
    <location>
        <begin position="49"/>
        <end position="60"/>
    </location>
</feature>
<feature type="topological domain" description="Cytoplasmic" evidence="1">
    <location>
        <begin position="61"/>
        <end position="97"/>
    </location>
</feature>
<feature type="transmembrane region" description="Helical" evidence="2">
    <location>
        <begin position="98"/>
        <end position="115"/>
    </location>
</feature>
<feature type="topological domain" description="Periplasmic" evidence="1">
    <location>
        <begin position="116"/>
        <end position="127"/>
    </location>
</feature>
<name>SECE_ECO57</name>
<organism>
    <name type="scientific">Escherichia coli O157:H7</name>
    <dbReference type="NCBI Taxonomy" id="83334"/>
    <lineage>
        <taxon>Bacteria</taxon>
        <taxon>Pseudomonadati</taxon>
        <taxon>Pseudomonadota</taxon>
        <taxon>Gammaproteobacteria</taxon>
        <taxon>Enterobacterales</taxon>
        <taxon>Enterobacteriaceae</taxon>
        <taxon>Escherichia</taxon>
    </lineage>
</organism>
<dbReference type="EMBL" id="AE005174">
    <property type="protein sequence ID" value="AAG59177.1"/>
    <property type="molecule type" value="Genomic_DNA"/>
</dbReference>
<dbReference type="EMBL" id="BA000007">
    <property type="protein sequence ID" value="BAB38327.1"/>
    <property type="molecule type" value="Genomic_DNA"/>
</dbReference>
<dbReference type="PIR" id="E86089">
    <property type="entry name" value="E86089"/>
</dbReference>
<dbReference type="PIR" id="H91241">
    <property type="entry name" value="H91241"/>
</dbReference>
<dbReference type="RefSeq" id="NP_312931.1">
    <property type="nucleotide sequence ID" value="NC_002695.1"/>
</dbReference>
<dbReference type="RefSeq" id="WP_001275702.1">
    <property type="nucleotide sequence ID" value="NZ_VOAI01000037.1"/>
</dbReference>
<dbReference type="SMR" id="P0AG98"/>
<dbReference type="STRING" id="155864.Z5554"/>
<dbReference type="GeneID" id="914948"/>
<dbReference type="GeneID" id="93777913"/>
<dbReference type="KEGG" id="ece:Z5554"/>
<dbReference type="KEGG" id="ecs:ECs_4904"/>
<dbReference type="PATRIC" id="fig|386585.9.peg.5128"/>
<dbReference type="eggNOG" id="COG0690">
    <property type="taxonomic scope" value="Bacteria"/>
</dbReference>
<dbReference type="HOGENOM" id="CLU_113663_0_1_6"/>
<dbReference type="OMA" id="AQESRFD"/>
<dbReference type="Proteomes" id="UP000000558">
    <property type="component" value="Chromosome"/>
</dbReference>
<dbReference type="Proteomes" id="UP000002519">
    <property type="component" value="Chromosome"/>
</dbReference>
<dbReference type="GO" id="GO:0005886">
    <property type="term" value="C:plasma membrane"/>
    <property type="evidence" value="ECO:0007669"/>
    <property type="project" value="UniProtKB-SubCell"/>
</dbReference>
<dbReference type="GO" id="GO:0008320">
    <property type="term" value="F:protein transmembrane transporter activity"/>
    <property type="evidence" value="ECO:0007669"/>
    <property type="project" value="UniProtKB-UniRule"/>
</dbReference>
<dbReference type="GO" id="GO:0065002">
    <property type="term" value="P:intracellular protein transmembrane transport"/>
    <property type="evidence" value="ECO:0007669"/>
    <property type="project" value="UniProtKB-UniRule"/>
</dbReference>
<dbReference type="GO" id="GO:0009306">
    <property type="term" value="P:protein secretion"/>
    <property type="evidence" value="ECO:0007669"/>
    <property type="project" value="UniProtKB-UniRule"/>
</dbReference>
<dbReference type="GO" id="GO:0006605">
    <property type="term" value="P:protein targeting"/>
    <property type="evidence" value="ECO:0007669"/>
    <property type="project" value="UniProtKB-UniRule"/>
</dbReference>
<dbReference type="GO" id="GO:0043952">
    <property type="term" value="P:protein transport by the Sec complex"/>
    <property type="evidence" value="ECO:0007669"/>
    <property type="project" value="UniProtKB-UniRule"/>
</dbReference>
<dbReference type="FunFam" id="1.20.5.1030:FF:000001">
    <property type="entry name" value="Preprotein translocase subunit SecE"/>
    <property type="match status" value="1"/>
</dbReference>
<dbReference type="Gene3D" id="1.20.5.1030">
    <property type="entry name" value="Preprotein translocase secy subunit"/>
    <property type="match status" value="1"/>
</dbReference>
<dbReference type="HAMAP" id="MF_00422">
    <property type="entry name" value="SecE"/>
    <property type="match status" value="1"/>
</dbReference>
<dbReference type="InterPro" id="IPR005807">
    <property type="entry name" value="SecE_bac"/>
</dbReference>
<dbReference type="InterPro" id="IPR038379">
    <property type="entry name" value="SecE_sf"/>
</dbReference>
<dbReference type="InterPro" id="IPR001901">
    <property type="entry name" value="Translocase_SecE/Sec61-g"/>
</dbReference>
<dbReference type="NCBIfam" id="NF004372">
    <property type="entry name" value="PRK05740.1-2"/>
    <property type="match status" value="1"/>
</dbReference>
<dbReference type="NCBIfam" id="NF004374">
    <property type="entry name" value="PRK05740.1-5"/>
    <property type="match status" value="1"/>
</dbReference>
<dbReference type="NCBIfam" id="TIGR00964">
    <property type="entry name" value="secE_bact"/>
    <property type="match status" value="1"/>
</dbReference>
<dbReference type="PANTHER" id="PTHR33910">
    <property type="entry name" value="PROTEIN TRANSLOCASE SUBUNIT SECE"/>
    <property type="match status" value="1"/>
</dbReference>
<dbReference type="PANTHER" id="PTHR33910:SF1">
    <property type="entry name" value="PROTEIN TRANSLOCASE SUBUNIT SECE"/>
    <property type="match status" value="1"/>
</dbReference>
<dbReference type="Pfam" id="PF00584">
    <property type="entry name" value="SecE"/>
    <property type="match status" value="1"/>
</dbReference>
<dbReference type="PRINTS" id="PR01650">
    <property type="entry name" value="SECETRNLCASE"/>
</dbReference>
<dbReference type="PROSITE" id="PS01067">
    <property type="entry name" value="SECE_SEC61G"/>
    <property type="match status" value="1"/>
</dbReference>
<accession>P0AG98</accession>
<accession>P16920</accession>
<reference key="1">
    <citation type="journal article" date="2001" name="Nature">
        <title>Genome sequence of enterohaemorrhagic Escherichia coli O157:H7.</title>
        <authorList>
            <person name="Perna N.T."/>
            <person name="Plunkett G. III"/>
            <person name="Burland V."/>
            <person name="Mau B."/>
            <person name="Glasner J.D."/>
            <person name="Rose D.J."/>
            <person name="Mayhew G.F."/>
            <person name="Evans P.S."/>
            <person name="Gregor J."/>
            <person name="Kirkpatrick H.A."/>
            <person name="Posfai G."/>
            <person name="Hackett J."/>
            <person name="Klink S."/>
            <person name="Boutin A."/>
            <person name="Shao Y."/>
            <person name="Miller L."/>
            <person name="Grotbeck E.J."/>
            <person name="Davis N.W."/>
            <person name="Lim A."/>
            <person name="Dimalanta E.T."/>
            <person name="Potamousis K."/>
            <person name="Apodaca J."/>
            <person name="Anantharaman T.S."/>
            <person name="Lin J."/>
            <person name="Yen G."/>
            <person name="Schwartz D.C."/>
            <person name="Welch R.A."/>
            <person name="Blattner F.R."/>
        </authorList>
    </citation>
    <scope>NUCLEOTIDE SEQUENCE [LARGE SCALE GENOMIC DNA]</scope>
    <source>
        <strain>O157:H7 / EDL933 / ATCC 700927 / EHEC</strain>
    </source>
</reference>
<reference key="2">
    <citation type="journal article" date="2001" name="DNA Res.">
        <title>Complete genome sequence of enterohemorrhagic Escherichia coli O157:H7 and genomic comparison with a laboratory strain K-12.</title>
        <authorList>
            <person name="Hayashi T."/>
            <person name="Makino K."/>
            <person name="Ohnishi M."/>
            <person name="Kurokawa K."/>
            <person name="Ishii K."/>
            <person name="Yokoyama K."/>
            <person name="Han C.-G."/>
            <person name="Ohtsubo E."/>
            <person name="Nakayama K."/>
            <person name="Murata T."/>
            <person name="Tanaka M."/>
            <person name="Tobe T."/>
            <person name="Iida T."/>
            <person name="Takami H."/>
            <person name="Honda T."/>
            <person name="Sasakawa C."/>
            <person name="Ogasawara N."/>
            <person name="Yasunaga T."/>
            <person name="Kuhara S."/>
            <person name="Shiba T."/>
            <person name="Hattori M."/>
            <person name="Shinagawa H."/>
        </authorList>
    </citation>
    <scope>NUCLEOTIDE SEQUENCE [LARGE SCALE GENOMIC DNA]</scope>
    <source>
        <strain>O157:H7 / Sakai / RIMD 0509952 / EHEC</strain>
    </source>
</reference>
<sequence>MSANTEAQGSGRGLEAMKWVVVVALLLVAIVGNYLYRDIMLPLRALAVVILIAAAGGVALLTTKGKATVAFAREARTEVRKVIWPTRQETLHTTLIVAAVTAVMSLILWGLDGILVRLVSFITGLRF</sequence>
<protein>
    <recommendedName>
        <fullName evidence="2">Protein translocase subunit SecE</fullName>
    </recommendedName>
</protein>
<gene>
    <name evidence="2" type="primary">secE</name>
    <name type="ordered locus">Z5554</name>
    <name type="ordered locus">ECs4904</name>
</gene>
<proteinExistence type="inferred from homology"/>